<sequence length="184" mass="20907">MKNVTDSFVSLGHWPSAGSFGFNTDIFATNPINLSVVLGVLIFFGKGVLSDLLDNRKQRILSTIRNSEELRGGAIEQLEKARARLRKVEIEADEFRVNGYSEIEREKSNLINAAYENLERLENYKNESIHFEQQRAMNQVRQRVFQQALQGALETLNSYLNSELHLRTISANIGMLGTMKNITD</sequence>
<dbReference type="EMBL" id="AJ506156">
    <property type="protein sequence ID" value="CAD56282.1"/>
    <property type="molecule type" value="Genomic_DNA"/>
</dbReference>
<dbReference type="RefSeq" id="NP_904085.1">
    <property type="nucleotide sequence ID" value="NC_005086.1"/>
</dbReference>
<dbReference type="SMR" id="Q70XU9"/>
<dbReference type="STRING" id="13333.Q70XU9"/>
<dbReference type="GeneID" id="2546499"/>
<dbReference type="KEGG" id="atr:2546499"/>
<dbReference type="OrthoDB" id="1900203at2759"/>
<dbReference type="Proteomes" id="UP000017836">
    <property type="component" value="Chloroplast"/>
</dbReference>
<dbReference type="GO" id="GO:0009535">
    <property type="term" value="C:chloroplast thylakoid membrane"/>
    <property type="evidence" value="ECO:0007669"/>
    <property type="project" value="UniProtKB-SubCell"/>
</dbReference>
<dbReference type="GO" id="GO:0045259">
    <property type="term" value="C:proton-transporting ATP synthase complex"/>
    <property type="evidence" value="ECO:0007669"/>
    <property type="project" value="UniProtKB-KW"/>
</dbReference>
<dbReference type="GO" id="GO:0046933">
    <property type="term" value="F:proton-transporting ATP synthase activity, rotational mechanism"/>
    <property type="evidence" value="ECO:0007669"/>
    <property type="project" value="UniProtKB-UniRule"/>
</dbReference>
<dbReference type="CDD" id="cd06503">
    <property type="entry name" value="ATP-synt_Fo_b"/>
    <property type="match status" value="1"/>
</dbReference>
<dbReference type="HAMAP" id="MF_01398">
    <property type="entry name" value="ATP_synth_b_bprime"/>
    <property type="match status" value="1"/>
</dbReference>
<dbReference type="InterPro" id="IPR002146">
    <property type="entry name" value="ATP_synth_b/b'su_bac/chlpt"/>
</dbReference>
<dbReference type="PANTHER" id="PTHR34264">
    <property type="entry name" value="ATP SYNTHASE SUBUNIT B, CHLOROPLASTIC"/>
    <property type="match status" value="1"/>
</dbReference>
<dbReference type="PANTHER" id="PTHR34264:SF3">
    <property type="entry name" value="ATP SYNTHASE SUBUNIT B, CHLOROPLASTIC"/>
    <property type="match status" value="1"/>
</dbReference>
<dbReference type="Pfam" id="PF00430">
    <property type="entry name" value="ATP-synt_B"/>
    <property type="match status" value="1"/>
</dbReference>
<organism>
    <name type="scientific">Amborella trichopoda</name>
    <dbReference type="NCBI Taxonomy" id="13333"/>
    <lineage>
        <taxon>Eukaryota</taxon>
        <taxon>Viridiplantae</taxon>
        <taxon>Streptophyta</taxon>
        <taxon>Embryophyta</taxon>
        <taxon>Tracheophyta</taxon>
        <taxon>Spermatophyta</taxon>
        <taxon>Magnoliopsida</taxon>
        <taxon>Amborellales</taxon>
        <taxon>Amborellaceae</taxon>
        <taxon>Amborella</taxon>
    </lineage>
</organism>
<evidence type="ECO:0000255" key="1">
    <source>
        <dbReference type="HAMAP-Rule" id="MF_01398"/>
    </source>
</evidence>
<reference key="1">
    <citation type="journal article" date="2003" name="Mol. Biol. Evol.">
        <title>Analysis of the Amborella trichopoda chloroplast genome sequence suggests that Amborella is not a basal angiosperm.</title>
        <authorList>
            <person name="Goremykin V.V."/>
            <person name="Hirsch-Ernst K.I."/>
            <person name="Wolfl S."/>
            <person name="Hellwig F.H."/>
        </authorList>
    </citation>
    <scope>NUCLEOTIDE SEQUENCE [LARGE SCALE GENOMIC DNA]</scope>
</reference>
<feature type="chain" id="PRO_0000368903" description="ATP synthase subunit b, chloroplastic">
    <location>
        <begin position="1"/>
        <end position="184"/>
    </location>
</feature>
<feature type="transmembrane region" description="Helical" evidence="1">
    <location>
        <begin position="27"/>
        <end position="49"/>
    </location>
</feature>
<name>ATPF_AMBTC</name>
<accession>Q70XU9</accession>
<geneLocation type="chloroplast"/>
<proteinExistence type="inferred from homology"/>
<keyword id="KW-0066">ATP synthesis</keyword>
<keyword id="KW-0138">CF(0)</keyword>
<keyword id="KW-0150">Chloroplast</keyword>
<keyword id="KW-0375">Hydrogen ion transport</keyword>
<keyword id="KW-0406">Ion transport</keyword>
<keyword id="KW-0472">Membrane</keyword>
<keyword id="KW-0934">Plastid</keyword>
<keyword id="KW-1185">Reference proteome</keyword>
<keyword id="KW-0793">Thylakoid</keyword>
<keyword id="KW-0812">Transmembrane</keyword>
<keyword id="KW-1133">Transmembrane helix</keyword>
<keyword id="KW-0813">Transport</keyword>
<protein>
    <recommendedName>
        <fullName evidence="1">ATP synthase subunit b, chloroplastic</fullName>
    </recommendedName>
    <alternativeName>
        <fullName evidence="1">ATP synthase F(0) sector subunit b</fullName>
    </alternativeName>
    <alternativeName>
        <fullName evidence="1">ATPase subunit I</fullName>
    </alternativeName>
</protein>
<gene>
    <name evidence="1" type="primary">atpF</name>
</gene>
<comment type="function">
    <text evidence="1">F(1)F(0) ATP synthase produces ATP from ADP in the presence of a proton or sodium gradient. F-type ATPases consist of two structural domains, F(1) containing the extramembraneous catalytic core and F(0) containing the membrane proton channel, linked together by a central stalk and a peripheral stalk. During catalysis, ATP synthesis in the catalytic domain of F(1) is coupled via a rotary mechanism of the central stalk subunits to proton translocation.</text>
</comment>
<comment type="function">
    <text evidence="1">Component of the F(0) channel, it forms part of the peripheral stalk, linking F(1) to F(0).</text>
</comment>
<comment type="subunit">
    <text evidence="1">F-type ATPases have 2 components, F(1) - the catalytic core - and F(0) - the membrane proton channel. F(1) has five subunits: alpha(3), beta(3), gamma(1), delta(1), epsilon(1). F(0) has four main subunits: a(1), b(1), b'(1) and c(10-14). The alpha and beta chains form an alternating ring which encloses part of the gamma chain. F(1) is attached to F(0) by a central stalk formed by the gamma and epsilon chains, while a peripheral stalk is formed by the delta, b and b' chains.</text>
</comment>
<comment type="subcellular location">
    <subcellularLocation>
        <location evidence="1">Plastid</location>
        <location evidence="1">Chloroplast thylakoid membrane</location>
        <topology evidence="1">Single-pass membrane protein</topology>
    </subcellularLocation>
</comment>
<comment type="miscellaneous">
    <text>In plastids the F-type ATPase is also known as CF(1)CF(0).</text>
</comment>
<comment type="similarity">
    <text evidence="1">Belongs to the ATPase B chain family.</text>
</comment>